<accession>B1JJ20</accession>
<feature type="chain" id="PRO_1000122399" description="Large ribosomal subunit protein bL20">
    <location>
        <begin position="1"/>
        <end position="118"/>
    </location>
</feature>
<sequence>MARVKRGVIARARHKKILKQAKGYYGARSRVYRVAFQAVIKAGQYAYRDRRQRKRQFRQLWIARINAAARQNGLSYSRFINGLKKASVEIDRKILADIAVFDKVAFSALVEKAKAALA</sequence>
<evidence type="ECO:0000255" key="1">
    <source>
        <dbReference type="HAMAP-Rule" id="MF_00382"/>
    </source>
</evidence>
<evidence type="ECO:0000305" key="2"/>
<gene>
    <name evidence="1" type="primary">rplT</name>
    <name type="ordered locus">YPK_1823</name>
</gene>
<organism>
    <name type="scientific">Yersinia pseudotuberculosis serotype O:3 (strain YPIII)</name>
    <dbReference type="NCBI Taxonomy" id="502800"/>
    <lineage>
        <taxon>Bacteria</taxon>
        <taxon>Pseudomonadati</taxon>
        <taxon>Pseudomonadota</taxon>
        <taxon>Gammaproteobacteria</taxon>
        <taxon>Enterobacterales</taxon>
        <taxon>Yersiniaceae</taxon>
        <taxon>Yersinia</taxon>
    </lineage>
</organism>
<name>RL20_YERPY</name>
<comment type="function">
    <text evidence="1">Binds directly to 23S ribosomal RNA and is necessary for the in vitro assembly process of the 50S ribosomal subunit. It is not involved in the protein synthesizing functions of that subunit.</text>
</comment>
<comment type="similarity">
    <text evidence="1">Belongs to the bacterial ribosomal protein bL20 family.</text>
</comment>
<keyword id="KW-0687">Ribonucleoprotein</keyword>
<keyword id="KW-0689">Ribosomal protein</keyword>
<keyword id="KW-0694">RNA-binding</keyword>
<keyword id="KW-0699">rRNA-binding</keyword>
<proteinExistence type="inferred from homology"/>
<dbReference type="EMBL" id="CP000950">
    <property type="protein sequence ID" value="ACA68114.1"/>
    <property type="molecule type" value="Genomic_DNA"/>
</dbReference>
<dbReference type="RefSeq" id="WP_002211833.1">
    <property type="nucleotide sequence ID" value="NZ_CP009792.1"/>
</dbReference>
<dbReference type="SMR" id="B1JJ20"/>
<dbReference type="GeneID" id="96665819"/>
<dbReference type="KEGG" id="ypy:YPK_1823"/>
<dbReference type="PATRIC" id="fig|502800.11.peg.2491"/>
<dbReference type="GO" id="GO:1990904">
    <property type="term" value="C:ribonucleoprotein complex"/>
    <property type="evidence" value="ECO:0007669"/>
    <property type="project" value="UniProtKB-KW"/>
</dbReference>
<dbReference type="GO" id="GO:0005840">
    <property type="term" value="C:ribosome"/>
    <property type="evidence" value="ECO:0007669"/>
    <property type="project" value="UniProtKB-KW"/>
</dbReference>
<dbReference type="GO" id="GO:0019843">
    <property type="term" value="F:rRNA binding"/>
    <property type="evidence" value="ECO:0007669"/>
    <property type="project" value="UniProtKB-UniRule"/>
</dbReference>
<dbReference type="GO" id="GO:0003735">
    <property type="term" value="F:structural constituent of ribosome"/>
    <property type="evidence" value="ECO:0007669"/>
    <property type="project" value="InterPro"/>
</dbReference>
<dbReference type="GO" id="GO:0000027">
    <property type="term" value="P:ribosomal large subunit assembly"/>
    <property type="evidence" value="ECO:0007669"/>
    <property type="project" value="UniProtKB-UniRule"/>
</dbReference>
<dbReference type="GO" id="GO:0006412">
    <property type="term" value="P:translation"/>
    <property type="evidence" value="ECO:0007669"/>
    <property type="project" value="InterPro"/>
</dbReference>
<dbReference type="CDD" id="cd07026">
    <property type="entry name" value="Ribosomal_L20"/>
    <property type="match status" value="1"/>
</dbReference>
<dbReference type="FunFam" id="1.10.1900.20:FF:000001">
    <property type="entry name" value="50S ribosomal protein L20"/>
    <property type="match status" value="1"/>
</dbReference>
<dbReference type="Gene3D" id="6.10.160.10">
    <property type="match status" value="1"/>
</dbReference>
<dbReference type="Gene3D" id="1.10.1900.20">
    <property type="entry name" value="Ribosomal protein L20"/>
    <property type="match status" value="1"/>
</dbReference>
<dbReference type="HAMAP" id="MF_00382">
    <property type="entry name" value="Ribosomal_bL20"/>
    <property type="match status" value="1"/>
</dbReference>
<dbReference type="InterPro" id="IPR005813">
    <property type="entry name" value="Ribosomal_bL20"/>
</dbReference>
<dbReference type="InterPro" id="IPR049946">
    <property type="entry name" value="RIBOSOMAL_L20_CS"/>
</dbReference>
<dbReference type="InterPro" id="IPR035566">
    <property type="entry name" value="Ribosomal_protein_bL20_C"/>
</dbReference>
<dbReference type="NCBIfam" id="TIGR01032">
    <property type="entry name" value="rplT_bact"/>
    <property type="match status" value="1"/>
</dbReference>
<dbReference type="PANTHER" id="PTHR10986">
    <property type="entry name" value="39S RIBOSOMAL PROTEIN L20"/>
    <property type="match status" value="1"/>
</dbReference>
<dbReference type="Pfam" id="PF00453">
    <property type="entry name" value="Ribosomal_L20"/>
    <property type="match status" value="1"/>
</dbReference>
<dbReference type="PRINTS" id="PR00062">
    <property type="entry name" value="RIBOSOMALL20"/>
</dbReference>
<dbReference type="SUPFAM" id="SSF74731">
    <property type="entry name" value="Ribosomal protein L20"/>
    <property type="match status" value="1"/>
</dbReference>
<dbReference type="PROSITE" id="PS00937">
    <property type="entry name" value="RIBOSOMAL_L20"/>
    <property type="match status" value="1"/>
</dbReference>
<protein>
    <recommendedName>
        <fullName evidence="1">Large ribosomal subunit protein bL20</fullName>
    </recommendedName>
    <alternativeName>
        <fullName evidence="2">50S ribosomal protein L20</fullName>
    </alternativeName>
</protein>
<reference key="1">
    <citation type="submission" date="2008-02" db="EMBL/GenBank/DDBJ databases">
        <title>Complete sequence of Yersinia pseudotuberculosis YPIII.</title>
        <authorList>
            <consortium name="US DOE Joint Genome Institute"/>
            <person name="Copeland A."/>
            <person name="Lucas S."/>
            <person name="Lapidus A."/>
            <person name="Glavina del Rio T."/>
            <person name="Dalin E."/>
            <person name="Tice H."/>
            <person name="Bruce D."/>
            <person name="Goodwin L."/>
            <person name="Pitluck S."/>
            <person name="Munk A.C."/>
            <person name="Brettin T."/>
            <person name="Detter J.C."/>
            <person name="Han C."/>
            <person name="Tapia R."/>
            <person name="Schmutz J."/>
            <person name="Larimer F."/>
            <person name="Land M."/>
            <person name="Hauser L."/>
            <person name="Challacombe J.F."/>
            <person name="Green L."/>
            <person name="Lindler L.E."/>
            <person name="Nikolich M.P."/>
            <person name="Richardson P."/>
        </authorList>
    </citation>
    <scope>NUCLEOTIDE SEQUENCE [LARGE SCALE GENOMIC DNA]</scope>
    <source>
        <strain>YPIII</strain>
    </source>
</reference>